<comment type="function">
    <text evidence="4 5 6 7">Transcription factor that regulates the gene cluster that mediates the biosynthesis of compactin, also known as mevastatin or ML-236B, and which acts as a potent competitive inhibitor of HMG-CoA reductase (PubMed:12172803, PubMed:12242508, PubMed:12436257). Binds to the consensus-binding motif 5'-WCGG-N(6)-TCGG-3' of target genes (PubMed:18667169).</text>
</comment>
<comment type="subcellular location">
    <subcellularLocation>
        <location evidence="1">Nucleus</location>
    </subcellularLocation>
</comment>
<comment type="biotechnology">
    <text evidence="3">Compactin (also known as mevastatin or ML-236B) and the intermediary metabolites Ml-236C and ML-236A are inhibitors of HMG-CoA reductase involved in cholesterogenesis (PubMed:1010803). Their hypocholesterolemic activity might be useful for lowering cholesterol levels in the blood and reduce artherosclerosis and coronary heart disease (PubMed:1010803).</text>
</comment>
<gene>
    <name evidence="6" type="primary">mlcR</name>
</gene>
<keyword id="KW-0238">DNA-binding</keyword>
<keyword id="KW-0479">Metal-binding</keyword>
<keyword id="KW-0539">Nucleus</keyword>
<keyword id="KW-0804">Transcription</keyword>
<keyword id="KW-0805">Transcription regulation</keyword>
<keyword id="KW-0862">Zinc</keyword>
<sequence>MSLPHATIPTNLRRRAFRRSCDRCHAQKLKCTGSNANLVRAQCQRCQQAGLRCVYSERLPKRNLHKEAAAGTTRATETSQPMTATSSTVFSSLAETPPPYCSPPTHIGTSALKETLSEPSAATLQFYDTSINFDDPESFPGGWPQPNTFRDDANSNESSGIPDLGYDFEGPLDATAPVSPSLFDLEVEGNSSSGQSNTSNTQRDLFESLSDVSQDLEVILHGVTVEWPKQKILSYPIGDFLNAFGRLLLHLQERVITSSNSSMLDGCLQTKNLFMAVHCYMLSVKIMTSLSQLLLSEVMKAQPCGQKQSTRMDWYWSGSTTRNDNGRAEALPSFHSNLHIGELISHLDPFMHALSSACTTLRVSLRLLSEIETALGIAQEHGAAASIRLVLSDMPSTSWQILGAENKTITPASRLLSVLWSDEAGDEEPKSTKASGKTINVLRRCYKEIFALAKKHNIA</sequence>
<evidence type="ECO:0000255" key="1">
    <source>
        <dbReference type="PROSITE-ProRule" id="PRU00227"/>
    </source>
</evidence>
<evidence type="ECO:0000256" key="2">
    <source>
        <dbReference type="SAM" id="MobiDB-lite"/>
    </source>
</evidence>
<evidence type="ECO:0000269" key="3">
    <source>
    </source>
</evidence>
<evidence type="ECO:0000269" key="4">
    <source>
    </source>
</evidence>
<evidence type="ECO:0000269" key="5">
    <source>
    </source>
</evidence>
<evidence type="ECO:0000303" key="6">
    <source>
    </source>
</evidence>
<evidence type="ECO:0000303" key="7">
    <source>
    </source>
</evidence>
<protein>
    <recommendedName>
        <fullName evidence="6">Transcription factor mlcR</fullName>
    </recommendedName>
    <alternativeName>
        <fullName evidence="6">Compactin biosynthesis protein R</fullName>
    </alternativeName>
</protein>
<feature type="chain" id="PRO_0000436292" description="Transcription factor mlcR">
    <location>
        <begin position="1"/>
        <end position="459"/>
    </location>
</feature>
<feature type="DNA-binding region" description="Zn(2)-C6 fungal-type" evidence="1">
    <location>
        <begin position="21"/>
        <end position="53"/>
    </location>
</feature>
<feature type="region of interest" description="Disordered" evidence="2">
    <location>
        <begin position="64"/>
        <end position="84"/>
    </location>
</feature>
<feature type="region of interest" description="Disordered" evidence="2">
    <location>
        <begin position="135"/>
        <end position="170"/>
    </location>
</feature>
<feature type="compositionally biased region" description="Low complexity" evidence="2">
    <location>
        <begin position="69"/>
        <end position="78"/>
    </location>
</feature>
<proteinExistence type="evidence at protein level"/>
<dbReference type="EMBL" id="AB072893">
    <property type="protein sequence ID" value="BAC20569.1"/>
    <property type="molecule type" value="Genomic_DNA"/>
</dbReference>
<dbReference type="SMR" id="Q8J0F2"/>
<dbReference type="GO" id="GO:0005634">
    <property type="term" value="C:nucleus"/>
    <property type="evidence" value="ECO:0007669"/>
    <property type="project" value="UniProtKB-SubCell"/>
</dbReference>
<dbReference type="GO" id="GO:0003677">
    <property type="term" value="F:DNA binding"/>
    <property type="evidence" value="ECO:0007669"/>
    <property type="project" value="UniProtKB-KW"/>
</dbReference>
<dbReference type="GO" id="GO:0000981">
    <property type="term" value="F:DNA-binding transcription factor activity, RNA polymerase II-specific"/>
    <property type="evidence" value="ECO:0007669"/>
    <property type="project" value="InterPro"/>
</dbReference>
<dbReference type="GO" id="GO:0008270">
    <property type="term" value="F:zinc ion binding"/>
    <property type="evidence" value="ECO:0007669"/>
    <property type="project" value="InterPro"/>
</dbReference>
<dbReference type="CDD" id="cd00067">
    <property type="entry name" value="GAL4"/>
    <property type="match status" value="1"/>
</dbReference>
<dbReference type="Gene3D" id="4.10.240.10">
    <property type="entry name" value="Zn(2)-C6 fungal-type DNA-binding domain"/>
    <property type="match status" value="1"/>
</dbReference>
<dbReference type="InterPro" id="IPR050797">
    <property type="entry name" value="Carb_Metab_Trans_Reg"/>
</dbReference>
<dbReference type="InterPro" id="IPR036864">
    <property type="entry name" value="Zn2-C6_fun-type_DNA-bd_sf"/>
</dbReference>
<dbReference type="InterPro" id="IPR001138">
    <property type="entry name" value="Zn2Cys6_DnaBD"/>
</dbReference>
<dbReference type="PANTHER" id="PTHR31668">
    <property type="entry name" value="GLUCOSE TRANSPORT TRANSCRIPTION REGULATOR RGT1-RELATED-RELATED"/>
    <property type="match status" value="1"/>
</dbReference>
<dbReference type="PANTHER" id="PTHR31668:SF18">
    <property type="entry name" value="MALTOSE FERMENTATION REGULATORY PROTEIN MAL13-RELATED"/>
    <property type="match status" value="1"/>
</dbReference>
<dbReference type="Pfam" id="PF00172">
    <property type="entry name" value="Zn_clus"/>
    <property type="match status" value="1"/>
</dbReference>
<dbReference type="SMART" id="SM00066">
    <property type="entry name" value="GAL4"/>
    <property type="match status" value="1"/>
</dbReference>
<dbReference type="SUPFAM" id="SSF57701">
    <property type="entry name" value="Zn2/Cys6 DNA-binding domain"/>
    <property type="match status" value="1"/>
</dbReference>
<dbReference type="PROSITE" id="PS00463">
    <property type="entry name" value="ZN2_CY6_FUNGAL_1"/>
    <property type="match status" value="1"/>
</dbReference>
<dbReference type="PROSITE" id="PS50048">
    <property type="entry name" value="ZN2_CY6_FUNGAL_2"/>
    <property type="match status" value="1"/>
</dbReference>
<organism>
    <name type="scientific">Penicillium citrinum</name>
    <dbReference type="NCBI Taxonomy" id="5077"/>
    <lineage>
        <taxon>Eukaryota</taxon>
        <taxon>Fungi</taxon>
        <taxon>Dikarya</taxon>
        <taxon>Ascomycota</taxon>
        <taxon>Pezizomycotina</taxon>
        <taxon>Eurotiomycetes</taxon>
        <taxon>Eurotiomycetidae</taxon>
        <taxon>Eurotiales</taxon>
        <taxon>Aspergillaceae</taxon>
        <taxon>Penicillium</taxon>
    </lineage>
</organism>
<reference key="1">
    <citation type="journal article" date="2002" name="Mol. Genet. Genomics">
        <title>Molecular cloning and characterization of an ML-236B (compactin) biosynthetic gene cluster in Penicillium citrinum.</title>
        <authorList>
            <person name="Abe Y."/>
            <person name="Suzuki T."/>
            <person name="Ono C."/>
            <person name="Iwamoto K."/>
            <person name="Hosobuchi M."/>
            <person name="Yoshikawa H."/>
        </authorList>
    </citation>
    <scope>NUCLEOTIDE SEQUENCE [GENOMIC DNA]</scope>
    <scope>INDUCTION</scope>
</reference>
<reference key="2">
    <citation type="journal article" date="2002" name="Mol. Genet. Genomics">
        <title>Effect of increased dosage of the ML-236B (compactin) biosynthetic gene cluster on ML-236B production in Penicillium citrinum.</title>
        <authorList>
            <person name="Abe Y."/>
            <person name="Suzuki T."/>
            <person name="Mizuno T."/>
            <person name="Ono C."/>
            <person name="Iwamoto K."/>
            <person name="Hosobuchi M."/>
            <person name="Yoshikawa H."/>
        </authorList>
    </citation>
    <scope>FUNCTION</scope>
</reference>
<reference key="3">
    <citation type="journal article" date="1976" name="J. Antibiot.">
        <title>ML-236A, ML-236B, and ML-236C, new inhibitors of cholesterogenesis produced by Penicillium citrinium.</title>
        <authorList>
            <person name="Endo A."/>
            <person name="Kuroda M."/>
            <person name="Tsujita Y."/>
        </authorList>
    </citation>
    <scope>BIOTECHNOLOGY</scope>
</reference>
<reference key="4">
    <citation type="journal article" date="2002" name="Mol. Genet. Genomics">
        <title>Functional analysis of mlcR, a regulatory gene for ML-236B (compactin) biosynthesis in Penicillium citrinum.</title>
        <authorList>
            <person name="Abe Y."/>
            <person name="Ono C."/>
            <person name="Hosobuchi M."/>
            <person name="Yoshikawa H."/>
        </authorList>
    </citation>
    <scope>FUNCTION</scope>
</reference>
<reference key="5">
    <citation type="journal article" date="2008" name="Fungal Genet. Biol.">
        <title>Identification of the specific sequence recognized by Penicillium citrinum MlcR, a GAL4-type transcriptional activator of ML-236B (compactin) biosynthetic genes.</title>
        <authorList>
            <person name="Baba S."/>
            <person name="Nihira T."/>
            <person name="Hosobuchi M."/>
        </authorList>
    </citation>
    <scope>FUNCTION</scope>
    <scope>DNA-BINDING</scope>
</reference>
<reference key="6">
    <citation type="journal article" date="2009" name="Mol. Genet. Genomics">
        <title>MlcR, a zinc cluster activator protein, is able to bind to a single (A/T)CGG site of cognate asymmetric motifs in the ML-236B (compactin) biosynthetic gene cluster.</title>
        <authorList>
            <person name="Baba S."/>
            <person name="Kinoshita H."/>
            <person name="Hosobuchi M."/>
            <person name="Nihira T."/>
        </authorList>
    </citation>
    <scope>FUNCTION</scope>
    <scope>DNA-BINDING</scope>
</reference>
<name>MLCR_PENCI</name>
<accession>Q8J0F2</accession>